<comment type="function">
    <text evidence="1">Acts as a component of the MCM2-7 complex (MCM complex) which is the replicative helicase essential for 'once per cell cycle' DNA replication initiation and elongation in eukaryotic cells. Core component of CDC45-MCM-GINS (CMG) helicase, the molecular machine that unwinds template DNA during replication, and around which the replisome is built. The active ATPase sites in the MCM2-7 ring are formed through the interaction surfaces of two neighboring subunits such that a critical structure of a conserved arginine finger motif is provided in trans relative to the ATP-binding site of the Walker A box of the adjacent subunit. The six ATPase active sites, however, are likely to contribute differentially to the complex helicase activity.</text>
</comment>
<comment type="catalytic activity">
    <reaction evidence="1">
        <text>ATP + H2O = ADP + phosphate + H(+)</text>
        <dbReference type="Rhea" id="RHEA:13065"/>
        <dbReference type="ChEBI" id="CHEBI:15377"/>
        <dbReference type="ChEBI" id="CHEBI:15378"/>
        <dbReference type="ChEBI" id="CHEBI:30616"/>
        <dbReference type="ChEBI" id="CHEBI:43474"/>
        <dbReference type="ChEBI" id="CHEBI:456216"/>
        <dbReference type="EC" id="3.6.4.12"/>
    </reaction>
    <physiologicalReaction direction="left-to-right" evidence="1">
        <dbReference type="Rhea" id="RHEA:13066"/>
    </physiologicalReaction>
</comment>
<comment type="subunit">
    <text evidence="2">Component of the mcm2-7 complex (RLF-M). The complex forms a toroidal hexameric ring with the proposed subunit order mcm2-mcm6-mcm4-mcm7-mcm3-mcm5. The heterodimer of mmcm3/mcm5 interacts with mcm4, mmcm6, mcm7 and weakly with mcm2. Component of the CMG helicase complex, composed of the mcm2-7 complex, the GINS complex and cdc45.</text>
</comment>
<comment type="subcellular location">
    <subcellularLocation>
        <location evidence="2">Nucleus</location>
    </subcellularLocation>
    <subcellularLocation>
        <location evidence="2">Chromosome</location>
    </subcellularLocation>
    <text evidence="2">Associated with chromatin before the formation of nuclei and detaches from it as DNA replication progresses.</text>
</comment>
<comment type="alternative products">
    <event type="alternative splicing"/>
    <isoform>
        <id>Q561P5-1</id>
        <name>1</name>
        <sequence type="displayed"/>
    </isoform>
    <isoform>
        <id>Q561P5-2</id>
        <name>2</name>
        <sequence type="described" ref="VSP_052071 VSP_052072"/>
    </isoform>
</comment>
<comment type="similarity">
    <text evidence="3">Belongs to the MCM family.</text>
</comment>
<feature type="chain" id="PRO_0000239941" description="DNA replication licensing factor mcm5">
    <location>
        <begin position="1"/>
        <end position="735"/>
    </location>
</feature>
<feature type="domain" description="MCM" evidence="3">
    <location>
        <begin position="332"/>
        <end position="538"/>
    </location>
</feature>
<feature type="short sequence motif" description="Arginine finger">
    <location>
        <begin position="513"/>
        <end position="516"/>
    </location>
</feature>
<feature type="binding site" evidence="1">
    <location>
        <position position="372"/>
    </location>
    <ligand>
        <name>ADP</name>
        <dbReference type="ChEBI" id="CHEBI:456216"/>
        <note>ligand shared with MCM3</note>
    </ligand>
</feature>
<feature type="splice variant" id="VSP_052071" description="In isoform 2." evidence="4">
    <original>REDDRVAIHEAMEQQTISIA</original>
    <variation>QGVVIVHLPSSLTAKWEGSK</variation>
    <location>
        <begin position="452"/>
        <end position="471"/>
    </location>
</feature>
<feature type="splice variant" id="VSP_052072" description="In isoform 2." evidence="4">
    <location>
        <begin position="472"/>
        <end position="735"/>
    </location>
</feature>
<name>MCM5_XENTR</name>
<dbReference type="EC" id="3.6.4.12"/>
<dbReference type="EMBL" id="CR848584">
    <property type="protein sequence ID" value="CAJ81496.1"/>
    <property type="molecule type" value="mRNA"/>
</dbReference>
<dbReference type="EMBL" id="BC093455">
    <property type="protein sequence ID" value="AAH93455.1"/>
    <property type="molecule type" value="mRNA"/>
</dbReference>
<dbReference type="RefSeq" id="NP_001017327.2">
    <molecule id="Q561P5-1"/>
    <property type="nucleotide sequence ID" value="NM_001017327.3"/>
</dbReference>
<dbReference type="SMR" id="Q561P5"/>
<dbReference type="FunCoup" id="Q561P5">
    <property type="interactions" value="1978"/>
</dbReference>
<dbReference type="STRING" id="8364.ENSXETP00000029688"/>
<dbReference type="PaxDb" id="8364-ENSXETP00000000515"/>
<dbReference type="GeneID" id="550081"/>
<dbReference type="KEGG" id="xtr:550081"/>
<dbReference type="AGR" id="Xenbase:XB-GENE-985665"/>
<dbReference type="CTD" id="4174"/>
<dbReference type="Xenbase" id="XB-GENE-985665">
    <property type="gene designation" value="mcm5"/>
</dbReference>
<dbReference type="eggNOG" id="KOG0481">
    <property type="taxonomic scope" value="Eukaryota"/>
</dbReference>
<dbReference type="HOGENOM" id="CLU_000995_7_2_1"/>
<dbReference type="InParanoid" id="Q561P5"/>
<dbReference type="OMA" id="ITYCKTR"/>
<dbReference type="OrthoDB" id="10036721at2759"/>
<dbReference type="PhylomeDB" id="Q561P5"/>
<dbReference type="TreeFam" id="TF105653"/>
<dbReference type="Reactome" id="R-XTR-68867">
    <property type="pathway name" value="Assembly of the pre-replicative complex"/>
</dbReference>
<dbReference type="Reactome" id="R-XTR-68949">
    <property type="pathway name" value="Orc1 removal from chromatin"/>
</dbReference>
<dbReference type="Reactome" id="R-XTR-68962">
    <property type="pathway name" value="Activation of the pre-replicative complex"/>
</dbReference>
<dbReference type="Reactome" id="R-XTR-69052">
    <property type="pathway name" value="Switching of origins to a post-replicative state"/>
</dbReference>
<dbReference type="Proteomes" id="UP000008143">
    <property type="component" value="Chromosome 4"/>
</dbReference>
<dbReference type="Bgee" id="ENSXETG00000000253">
    <property type="expression patterns" value="Expressed in egg cell and 11 other cell types or tissues"/>
</dbReference>
<dbReference type="GO" id="GO:0000785">
    <property type="term" value="C:chromatin"/>
    <property type="evidence" value="ECO:0000250"/>
    <property type="project" value="UniProtKB"/>
</dbReference>
<dbReference type="GO" id="GO:0071162">
    <property type="term" value="C:CMG complex"/>
    <property type="evidence" value="ECO:0000250"/>
    <property type="project" value="UniProtKB"/>
</dbReference>
<dbReference type="GO" id="GO:0042555">
    <property type="term" value="C:MCM complex"/>
    <property type="evidence" value="ECO:0000250"/>
    <property type="project" value="UniProtKB"/>
</dbReference>
<dbReference type="GO" id="GO:0005524">
    <property type="term" value="F:ATP binding"/>
    <property type="evidence" value="ECO:0007669"/>
    <property type="project" value="UniProtKB-KW"/>
</dbReference>
<dbReference type="GO" id="GO:0016887">
    <property type="term" value="F:ATP hydrolysis activity"/>
    <property type="evidence" value="ECO:0007669"/>
    <property type="project" value="RHEA"/>
</dbReference>
<dbReference type="GO" id="GO:0003688">
    <property type="term" value="F:DNA replication origin binding"/>
    <property type="evidence" value="ECO:0007669"/>
    <property type="project" value="InterPro"/>
</dbReference>
<dbReference type="GO" id="GO:0004386">
    <property type="term" value="F:helicase activity"/>
    <property type="evidence" value="ECO:0007669"/>
    <property type="project" value="UniProtKB-KW"/>
</dbReference>
<dbReference type="GO" id="GO:0044786">
    <property type="term" value="P:cell cycle DNA replication"/>
    <property type="evidence" value="ECO:0000250"/>
    <property type="project" value="UniProtKB"/>
</dbReference>
<dbReference type="GO" id="GO:0006270">
    <property type="term" value="P:DNA replication initiation"/>
    <property type="evidence" value="ECO:0007669"/>
    <property type="project" value="InterPro"/>
</dbReference>
<dbReference type="GO" id="GO:0030174">
    <property type="term" value="P:regulation of DNA-templated DNA replication initiation"/>
    <property type="evidence" value="ECO:0000250"/>
    <property type="project" value="UniProtKB"/>
</dbReference>
<dbReference type="CDD" id="cd17756">
    <property type="entry name" value="MCM5"/>
    <property type="match status" value="1"/>
</dbReference>
<dbReference type="FunFam" id="2.20.28.10:FF:000005">
    <property type="entry name" value="DNA helicase"/>
    <property type="match status" value="1"/>
</dbReference>
<dbReference type="FunFam" id="3.30.1640.10:FF:000006">
    <property type="entry name" value="DNA helicase"/>
    <property type="match status" value="1"/>
</dbReference>
<dbReference type="FunFam" id="3.40.50.300:FF:000241">
    <property type="entry name" value="DNA helicase"/>
    <property type="match status" value="1"/>
</dbReference>
<dbReference type="Gene3D" id="2.20.28.10">
    <property type="match status" value="1"/>
</dbReference>
<dbReference type="Gene3D" id="3.30.1640.10">
    <property type="entry name" value="mini-chromosome maintenance (MCM) complex, chain A, domain 1"/>
    <property type="match status" value="1"/>
</dbReference>
<dbReference type="Gene3D" id="2.40.50.140">
    <property type="entry name" value="Nucleic acid-binding proteins"/>
    <property type="match status" value="1"/>
</dbReference>
<dbReference type="Gene3D" id="3.40.50.300">
    <property type="entry name" value="P-loop containing nucleotide triphosphate hydrolases"/>
    <property type="match status" value="1"/>
</dbReference>
<dbReference type="InterPro" id="IPR031327">
    <property type="entry name" value="MCM"/>
</dbReference>
<dbReference type="InterPro" id="IPR008048">
    <property type="entry name" value="MCM5"/>
</dbReference>
<dbReference type="InterPro" id="IPR054125">
    <property type="entry name" value="MCM5_C"/>
</dbReference>
<dbReference type="InterPro" id="IPR018525">
    <property type="entry name" value="MCM_CS"/>
</dbReference>
<dbReference type="InterPro" id="IPR001208">
    <property type="entry name" value="MCM_dom"/>
</dbReference>
<dbReference type="InterPro" id="IPR041562">
    <property type="entry name" value="MCM_lid"/>
</dbReference>
<dbReference type="InterPro" id="IPR027925">
    <property type="entry name" value="MCM_N"/>
</dbReference>
<dbReference type="InterPro" id="IPR033762">
    <property type="entry name" value="MCM_OB"/>
</dbReference>
<dbReference type="InterPro" id="IPR012340">
    <property type="entry name" value="NA-bd_OB-fold"/>
</dbReference>
<dbReference type="InterPro" id="IPR027417">
    <property type="entry name" value="P-loop_NTPase"/>
</dbReference>
<dbReference type="PANTHER" id="PTHR11630">
    <property type="entry name" value="DNA REPLICATION LICENSING FACTOR MCM FAMILY MEMBER"/>
    <property type="match status" value="1"/>
</dbReference>
<dbReference type="PANTHER" id="PTHR11630:SF42">
    <property type="entry name" value="DNA REPLICATION LICENSING FACTOR MCM5"/>
    <property type="match status" value="1"/>
</dbReference>
<dbReference type="Pfam" id="PF00493">
    <property type="entry name" value="MCM"/>
    <property type="match status" value="1"/>
</dbReference>
<dbReference type="Pfam" id="PF21933">
    <property type="entry name" value="MCM5_C"/>
    <property type="match status" value="1"/>
</dbReference>
<dbReference type="Pfam" id="PF17855">
    <property type="entry name" value="MCM_lid"/>
    <property type="match status" value="1"/>
</dbReference>
<dbReference type="Pfam" id="PF14551">
    <property type="entry name" value="MCM_N"/>
    <property type="match status" value="1"/>
</dbReference>
<dbReference type="Pfam" id="PF17207">
    <property type="entry name" value="MCM_OB"/>
    <property type="match status" value="1"/>
</dbReference>
<dbReference type="PRINTS" id="PR01657">
    <property type="entry name" value="MCMFAMILY"/>
</dbReference>
<dbReference type="PRINTS" id="PR01661">
    <property type="entry name" value="MCMPROTEIN5"/>
</dbReference>
<dbReference type="SMART" id="SM00350">
    <property type="entry name" value="MCM"/>
    <property type="match status" value="1"/>
</dbReference>
<dbReference type="SUPFAM" id="SSF50249">
    <property type="entry name" value="Nucleic acid-binding proteins"/>
    <property type="match status" value="1"/>
</dbReference>
<dbReference type="SUPFAM" id="SSF52540">
    <property type="entry name" value="P-loop containing nucleoside triphosphate hydrolases"/>
    <property type="match status" value="1"/>
</dbReference>
<dbReference type="PROSITE" id="PS00847">
    <property type="entry name" value="MCM_1"/>
    <property type="match status" value="1"/>
</dbReference>
<dbReference type="PROSITE" id="PS50051">
    <property type="entry name" value="MCM_2"/>
    <property type="match status" value="1"/>
</dbReference>
<sequence>MSGFDDLGIYYSDSFGGEQPVGDDGQAKKSQLKKRFREFLRQYRVGTDRTGFTFKYRDELKRHYNLGEYWIEVEMEDLASFDEDLADYLYKQPTEHLQLLEEAAQEVADEVTRPRPAGEETIQEIQVMLRSDANPANIRSLKSEQMSHLVKIPGIIIAATAVRAKATKISIQCRSCRNTIGNIAVRPGLEGYAMPRKCNTEQAGRPKCPLDPYFIIPDKCKCVDFQTLKLQESPDAVPHGELPRHMQLYCDRYLCDKVVPGNRVTIMGIYSIRKSGKTSTKGRDRVGVGIRSSYIRVVGIQVDTEGTGRSAAGAITPQEEEEFRRLSAKPDIYETVAKSIAPSIYGSSDIKKAIACLLFGGSRKRLPDGLTRRGDVNLLMLGDPGTAKSQLLKFVERCSPIGVYTSGKGSSAAGLTASVMRDPVSRNFIMEGGAMVLADGGVVCIDEFDKMREDDRVAIHEAMEQQTISIAKAGITTTLNSRCSVLAAANSVYGRWDDTKGEENIDFMPTILSRFDMIFIVKDEHNEQRDMTLAKHVMNVHLSARTQSSSVEGEIDLNTLKKYIAYCRAKCGPRLSAESAEKLKNRYILMRSGARDHERETEKRSSIPITVRQLEAIVRISESLGKMKLQPFATETDVEEALRLFQVSTLDAAMSGSLSGVEGFTTQEDQEMLSRIEKQLKRRFAIGSQVSEHSIIQDFLKQKYPEHAIHKVLHLMMRRGEIQHRLQRKVLYRIK</sequence>
<keyword id="KW-0025">Alternative splicing</keyword>
<keyword id="KW-0067">ATP-binding</keyword>
<keyword id="KW-0131">Cell cycle</keyword>
<keyword id="KW-0158">Chromosome</keyword>
<keyword id="KW-0235">DNA replication</keyword>
<keyword id="KW-0238">DNA-binding</keyword>
<keyword id="KW-0347">Helicase</keyword>
<keyword id="KW-0378">Hydrolase</keyword>
<keyword id="KW-0547">Nucleotide-binding</keyword>
<keyword id="KW-0539">Nucleus</keyword>
<keyword id="KW-1185">Reference proteome</keyword>
<protein>
    <recommendedName>
        <fullName evidence="1">DNA replication licensing factor mcm5</fullName>
        <ecNumber>3.6.4.12</ecNumber>
    </recommendedName>
</protein>
<organism>
    <name type="scientific">Xenopus tropicalis</name>
    <name type="common">Western clawed frog</name>
    <name type="synonym">Silurana tropicalis</name>
    <dbReference type="NCBI Taxonomy" id="8364"/>
    <lineage>
        <taxon>Eukaryota</taxon>
        <taxon>Metazoa</taxon>
        <taxon>Chordata</taxon>
        <taxon>Craniata</taxon>
        <taxon>Vertebrata</taxon>
        <taxon>Euteleostomi</taxon>
        <taxon>Amphibia</taxon>
        <taxon>Batrachia</taxon>
        <taxon>Anura</taxon>
        <taxon>Pipoidea</taxon>
        <taxon>Pipidae</taxon>
        <taxon>Xenopodinae</taxon>
        <taxon>Xenopus</taxon>
        <taxon>Silurana</taxon>
    </lineage>
</organism>
<evidence type="ECO:0000250" key="1">
    <source>
        <dbReference type="UniProtKB" id="P33992"/>
    </source>
</evidence>
<evidence type="ECO:0000250" key="2">
    <source>
        <dbReference type="UniProtKB" id="P55862"/>
    </source>
</evidence>
<evidence type="ECO:0000255" key="3"/>
<evidence type="ECO:0000303" key="4">
    <source ref="1"/>
</evidence>
<evidence type="ECO:0000312" key="5">
    <source>
        <dbReference type="EMBL" id="AAH93455.1"/>
    </source>
</evidence>
<evidence type="ECO:0000312" key="6">
    <source>
        <dbReference type="EMBL" id="CAJ81496.1"/>
    </source>
</evidence>
<reference evidence="6" key="1">
    <citation type="submission" date="2006-03" db="EMBL/GenBank/DDBJ databases">
        <authorList>
            <consortium name="Sanger Xenopus tropicalis EST/cDNA project"/>
        </authorList>
    </citation>
    <scope>NUCLEOTIDE SEQUENCE [LARGE SCALE MRNA] (ISOFORM 2)</scope>
    <source>
        <tissue>Egg</tissue>
    </source>
</reference>
<reference evidence="6" key="2">
    <citation type="submission" date="2005-04" db="EMBL/GenBank/DDBJ databases">
        <authorList>
            <consortium name="NIH - Xenopus Gene Collection (XGC) project"/>
        </authorList>
    </citation>
    <scope>NUCLEOTIDE SEQUENCE [LARGE SCALE MRNA] (ISOFORM 1)</scope>
    <source>
        <tissue>Tail bud</tissue>
    </source>
</reference>
<accession>Q561P5</accession>
<accession>Q28DV1</accession>
<proteinExistence type="evidence at transcript level"/>
<gene>
    <name evidence="5" type="primary">mcm5</name>
    <name type="ORF">TEgg011k14.1</name>
</gene>